<name>COMB_CLOPS</name>
<feature type="chain" id="PRO_1000014464" description="Probable 2-phosphosulfolactate phosphatase">
    <location>
        <begin position="1"/>
        <end position="247"/>
    </location>
</feature>
<organism>
    <name type="scientific">Clostridium perfringens (strain SM101 / Type A)</name>
    <dbReference type="NCBI Taxonomy" id="289380"/>
    <lineage>
        <taxon>Bacteria</taxon>
        <taxon>Bacillati</taxon>
        <taxon>Bacillota</taxon>
        <taxon>Clostridia</taxon>
        <taxon>Eubacteriales</taxon>
        <taxon>Clostridiaceae</taxon>
        <taxon>Clostridium</taxon>
    </lineage>
</organism>
<sequence>MKIDVIISADYIDSEALKGKIAVVIDMLRATSVITTALYNGAKKVIPVVSVEEAFEKAKELKSLGEEVLLGGERKALKIDGFDFSNSPLEYKREIVEGKNVIMSTTNGTRALNLCSKADKVIVASVLNGQAVAKYLENEEKEIVFVNSGTNGEFSSDDFMCAGYIISELCKNKEVELTDIAKTAKYVYESSEGIEEFIKDAKHYNILKNLGLEEDLKYCSTKNLIDLVFEFKNGEIKTVESGIKVKI</sequence>
<comment type="catalytic activity">
    <reaction evidence="1">
        <text>(2R)-O-phospho-3-sulfolactate + H2O = (2R)-3-sulfolactate + phosphate</text>
        <dbReference type="Rhea" id="RHEA:23416"/>
        <dbReference type="ChEBI" id="CHEBI:15377"/>
        <dbReference type="ChEBI" id="CHEBI:15597"/>
        <dbReference type="ChEBI" id="CHEBI:43474"/>
        <dbReference type="ChEBI" id="CHEBI:58738"/>
        <dbReference type="EC" id="3.1.3.71"/>
    </reaction>
</comment>
<comment type="cofactor">
    <cofactor evidence="1">
        <name>Mg(2+)</name>
        <dbReference type="ChEBI" id="CHEBI:18420"/>
    </cofactor>
</comment>
<comment type="similarity">
    <text evidence="1">Belongs to the ComB family.</text>
</comment>
<keyword id="KW-0378">Hydrolase</keyword>
<keyword id="KW-0460">Magnesium</keyword>
<dbReference type="EC" id="3.1.3.71" evidence="1"/>
<dbReference type="EMBL" id="CP000312">
    <property type="protein sequence ID" value="ABG85733.1"/>
    <property type="molecule type" value="Genomic_DNA"/>
</dbReference>
<dbReference type="RefSeq" id="WP_011593242.1">
    <property type="nucleotide sequence ID" value="NC_008262.1"/>
</dbReference>
<dbReference type="SMR" id="Q0SPZ8"/>
<dbReference type="KEGG" id="cpr:CPR_2562"/>
<dbReference type="Proteomes" id="UP000001824">
    <property type="component" value="Chromosome"/>
</dbReference>
<dbReference type="GO" id="GO:0050532">
    <property type="term" value="F:2-phosphosulfolactate phosphatase activity"/>
    <property type="evidence" value="ECO:0007669"/>
    <property type="project" value="UniProtKB-UniRule"/>
</dbReference>
<dbReference type="GO" id="GO:0000287">
    <property type="term" value="F:magnesium ion binding"/>
    <property type="evidence" value="ECO:0007669"/>
    <property type="project" value="UniProtKB-UniRule"/>
</dbReference>
<dbReference type="GO" id="GO:0050545">
    <property type="term" value="F:sulfopyruvate decarboxylase activity"/>
    <property type="evidence" value="ECO:0007669"/>
    <property type="project" value="TreeGrafter"/>
</dbReference>
<dbReference type="FunFam" id="3.90.1560.10:FF:000001">
    <property type="entry name" value="Probable 2-phosphosulfolactate phosphatase"/>
    <property type="match status" value="1"/>
</dbReference>
<dbReference type="Gene3D" id="3.90.1560.10">
    <property type="entry name" value="ComB-like"/>
    <property type="match status" value="1"/>
</dbReference>
<dbReference type="HAMAP" id="MF_00490">
    <property type="entry name" value="ComB"/>
    <property type="match status" value="1"/>
</dbReference>
<dbReference type="InterPro" id="IPR005238">
    <property type="entry name" value="ComB-like"/>
</dbReference>
<dbReference type="InterPro" id="IPR036702">
    <property type="entry name" value="ComB-like_sf"/>
</dbReference>
<dbReference type="NCBIfam" id="NF002055">
    <property type="entry name" value="PRK00886.1-4"/>
    <property type="match status" value="1"/>
</dbReference>
<dbReference type="PANTHER" id="PTHR37311">
    <property type="entry name" value="2-PHOSPHOSULFOLACTATE PHOSPHATASE-RELATED"/>
    <property type="match status" value="1"/>
</dbReference>
<dbReference type="PANTHER" id="PTHR37311:SF1">
    <property type="entry name" value="2-PHOSPHOSULFOLACTATE PHOSPHATASE-RELATED"/>
    <property type="match status" value="1"/>
</dbReference>
<dbReference type="Pfam" id="PF04029">
    <property type="entry name" value="2-ph_phosp"/>
    <property type="match status" value="1"/>
</dbReference>
<dbReference type="SUPFAM" id="SSF142823">
    <property type="entry name" value="ComB-like"/>
    <property type="match status" value="1"/>
</dbReference>
<gene>
    <name evidence="1" type="primary">comB</name>
    <name type="ordered locus">CPR_2562</name>
</gene>
<accession>Q0SPZ8</accession>
<evidence type="ECO:0000255" key="1">
    <source>
        <dbReference type="HAMAP-Rule" id="MF_00490"/>
    </source>
</evidence>
<proteinExistence type="inferred from homology"/>
<protein>
    <recommendedName>
        <fullName evidence="1">Probable 2-phosphosulfolactate phosphatase</fullName>
        <ecNumber evidence="1">3.1.3.71</ecNumber>
    </recommendedName>
</protein>
<reference key="1">
    <citation type="journal article" date="2006" name="Genome Res.">
        <title>Skewed genomic variability in strains of the toxigenic bacterial pathogen, Clostridium perfringens.</title>
        <authorList>
            <person name="Myers G.S.A."/>
            <person name="Rasko D.A."/>
            <person name="Cheung J.K."/>
            <person name="Ravel J."/>
            <person name="Seshadri R."/>
            <person name="DeBoy R.T."/>
            <person name="Ren Q."/>
            <person name="Varga J."/>
            <person name="Awad M.M."/>
            <person name="Brinkac L.M."/>
            <person name="Daugherty S.C."/>
            <person name="Haft D.H."/>
            <person name="Dodson R.J."/>
            <person name="Madupu R."/>
            <person name="Nelson W.C."/>
            <person name="Rosovitz M.J."/>
            <person name="Sullivan S.A."/>
            <person name="Khouri H."/>
            <person name="Dimitrov G.I."/>
            <person name="Watkins K.L."/>
            <person name="Mulligan S."/>
            <person name="Benton J."/>
            <person name="Radune D."/>
            <person name="Fisher D.J."/>
            <person name="Atkins H.S."/>
            <person name="Hiscox T."/>
            <person name="Jost B.H."/>
            <person name="Billington S.J."/>
            <person name="Songer J.G."/>
            <person name="McClane B.A."/>
            <person name="Titball R.W."/>
            <person name="Rood J.I."/>
            <person name="Melville S.B."/>
            <person name="Paulsen I.T."/>
        </authorList>
    </citation>
    <scope>NUCLEOTIDE SEQUENCE [LARGE SCALE GENOMIC DNA]</scope>
    <source>
        <strain>SM101 / Type A</strain>
    </source>
</reference>